<sequence>GCCPTFWTSFGSNCYRFFAVSLTWAEGEQFCQSFSVPSRGDIDSIGHLVSIHSETEQNFVYHYFETSTKDDTTPEMWLGFNDRTTEGNFQWTDGSPNDFTAWVGSNPDNYGSGEDCTQMVMGAGLNWIDLPCSSTRHYLICKLPLWE</sequence>
<protein>
    <recommendedName>
        <fullName>Echinoidin</fullName>
    </recommendedName>
</protein>
<accession>P06027</accession>
<organism>
    <name type="scientific">Heliocidaris crassispina</name>
    <name type="common">Sea urchin</name>
    <name type="synonym">Anthocidaris crassispina</name>
    <dbReference type="NCBI Taxonomy" id="1043166"/>
    <lineage>
        <taxon>Eukaryota</taxon>
        <taxon>Metazoa</taxon>
        <taxon>Echinodermata</taxon>
        <taxon>Eleutherozoa</taxon>
        <taxon>Echinozoa</taxon>
        <taxon>Echinoidea</taxon>
        <taxon>Euechinoidea</taxon>
        <taxon>Echinacea</taxon>
        <taxon>Camarodonta</taxon>
        <taxon>Echinidea</taxon>
        <taxon>Echinometridae</taxon>
        <taxon>Heliocidaris</taxon>
    </lineage>
</organism>
<dbReference type="PIR" id="A26697">
    <property type="entry name" value="A26697"/>
</dbReference>
<dbReference type="SMR" id="P06027"/>
<dbReference type="iPTMnet" id="P06027"/>
<dbReference type="GO" id="GO:0005576">
    <property type="term" value="C:extracellular region"/>
    <property type="evidence" value="ECO:0007669"/>
    <property type="project" value="UniProtKB-SubCell"/>
</dbReference>
<dbReference type="GO" id="GO:0030246">
    <property type="term" value="F:carbohydrate binding"/>
    <property type="evidence" value="ECO:0007669"/>
    <property type="project" value="UniProtKB-KW"/>
</dbReference>
<dbReference type="CDD" id="cd03589">
    <property type="entry name" value="CLECT_CEL-1_like"/>
    <property type="match status" value="1"/>
</dbReference>
<dbReference type="Gene3D" id="3.10.100.10">
    <property type="entry name" value="Mannose-Binding Protein A, subunit A"/>
    <property type="match status" value="1"/>
</dbReference>
<dbReference type="InterPro" id="IPR001304">
    <property type="entry name" value="C-type_lectin-like"/>
</dbReference>
<dbReference type="InterPro" id="IPR016186">
    <property type="entry name" value="C-type_lectin-like/link_sf"/>
</dbReference>
<dbReference type="InterPro" id="IPR050111">
    <property type="entry name" value="C-type_lectin/snaclec_domain"/>
</dbReference>
<dbReference type="InterPro" id="IPR018378">
    <property type="entry name" value="C-type_lectin_CS"/>
</dbReference>
<dbReference type="InterPro" id="IPR033988">
    <property type="entry name" value="CEL1-like_CTLD"/>
</dbReference>
<dbReference type="InterPro" id="IPR016187">
    <property type="entry name" value="CTDL_fold"/>
</dbReference>
<dbReference type="PANTHER" id="PTHR22803">
    <property type="entry name" value="MANNOSE, PHOSPHOLIPASE, LECTIN RECEPTOR RELATED"/>
    <property type="match status" value="1"/>
</dbReference>
<dbReference type="Pfam" id="PF00059">
    <property type="entry name" value="Lectin_C"/>
    <property type="match status" value="1"/>
</dbReference>
<dbReference type="SMART" id="SM00034">
    <property type="entry name" value="CLECT"/>
    <property type="match status" value="1"/>
</dbReference>
<dbReference type="SUPFAM" id="SSF56436">
    <property type="entry name" value="C-type lectin-like"/>
    <property type="match status" value="1"/>
</dbReference>
<dbReference type="PROSITE" id="PS00615">
    <property type="entry name" value="C_TYPE_LECTIN_1"/>
    <property type="match status" value="1"/>
</dbReference>
<dbReference type="PROSITE" id="PS50041">
    <property type="entry name" value="C_TYPE_LECTIN_2"/>
    <property type="match status" value="1"/>
</dbReference>
<proteinExistence type="evidence at protein level"/>
<reference key="1">
    <citation type="journal article" date="1987" name="J. Biol. Chem.">
        <title>The complete amino acid sequence of echinoidin, a lectin from the coelomic fluid of the sea urchin Anthocidaris crassispina. Homologies with mammalian and insect lectins.</title>
        <authorList>
            <person name="Giga Y."/>
            <person name="Ikai A."/>
            <person name="Takahashi K."/>
        </authorList>
    </citation>
    <scope>PROTEIN SEQUENCE</scope>
    <scope>GLYCOSYLATION AT SER-38</scope>
</reference>
<feature type="chain" id="PRO_0000046641" description="Echinoidin">
    <location>
        <begin position="1"/>
        <end position="147"/>
    </location>
</feature>
<feature type="domain" description="C-type lectin" evidence="2">
    <location>
        <begin position="1"/>
        <end position="143"/>
    </location>
</feature>
<feature type="short sequence motif" description="Cell attachment site" evidence="1">
    <location>
        <begin position="39"/>
        <end position="41"/>
    </location>
</feature>
<feature type="glycosylation site" description="O-linked (Hex) serine" evidence="3">
    <location>
        <position position="38"/>
    </location>
</feature>
<feature type="disulfide bond" description="Interchain">
    <location>
        <position position="2"/>
    </location>
</feature>
<feature type="disulfide bond">
    <location>
        <begin position="3"/>
        <end position="14"/>
    </location>
</feature>
<feature type="disulfide bond">
    <location>
        <begin position="31"/>
        <end position="141"/>
    </location>
</feature>
<feature type="disulfide bond">
    <location>
        <begin position="116"/>
        <end position="132"/>
    </location>
</feature>
<evidence type="ECO:0000255" key="1"/>
<evidence type="ECO:0000255" key="2">
    <source>
        <dbReference type="PROSITE-ProRule" id="PRU00040"/>
    </source>
</evidence>
<evidence type="ECO:0000269" key="3">
    <source>
    </source>
</evidence>
<comment type="function">
    <text>Role in the defense system of the organism against microorganisms. This lectin is specific for Gal-GalNAc.</text>
</comment>
<comment type="subunit">
    <text>Homodimer; disulfide-linked.</text>
</comment>
<comment type="subcellular location">
    <subcellularLocation>
        <location>Secreted</location>
    </subcellularLocation>
</comment>
<comment type="tissue specificity">
    <text>Coelemic fluid.</text>
</comment>
<comment type="PTM">
    <text>The identity of the saccharide is not reported in PubMed:3571253, and it is unlikely to be N-acetylgalactosamine. The sugar attached to Ser-38 is represented simply as Hex.</text>
</comment>
<name>LECE_HELCR</name>
<keyword id="KW-0903">Direct protein sequencing</keyword>
<keyword id="KW-1015">Disulfide bond</keyword>
<keyword id="KW-0325">Glycoprotein</keyword>
<keyword id="KW-0430">Lectin</keyword>
<keyword id="KW-0964">Secreted</keyword>